<accession>Q03EG6</accession>
<keyword id="KW-0067">ATP-binding</keyword>
<keyword id="KW-0436">Ligase</keyword>
<keyword id="KW-0547">Nucleotide-binding</keyword>
<keyword id="KW-0648">Protein biosynthesis</keyword>
<dbReference type="EC" id="6.3.5.-" evidence="1"/>
<dbReference type="EMBL" id="CP000422">
    <property type="protein sequence ID" value="ABJ68406.1"/>
    <property type="molecule type" value="Genomic_DNA"/>
</dbReference>
<dbReference type="RefSeq" id="WP_011673637.1">
    <property type="nucleotide sequence ID" value="NC_008525.1"/>
</dbReference>
<dbReference type="SMR" id="Q03EG6"/>
<dbReference type="STRING" id="278197.PEPE_1368"/>
<dbReference type="GeneID" id="33061322"/>
<dbReference type="KEGG" id="ppe:PEPE_1368"/>
<dbReference type="eggNOG" id="COG0064">
    <property type="taxonomic scope" value="Bacteria"/>
</dbReference>
<dbReference type="HOGENOM" id="CLU_019240_0_0_9"/>
<dbReference type="OrthoDB" id="9804078at2"/>
<dbReference type="Proteomes" id="UP000000773">
    <property type="component" value="Chromosome"/>
</dbReference>
<dbReference type="GO" id="GO:0050566">
    <property type="term" value="F:asparaginyl-tRNA synthase (glutamine-hydrolyzing) activity"/>
    <property type="evidence" value="ECO:0007669"/>
    <property type="project" value="RHEA"/>
</dbReference>
<dbReference type="GO" id="GO:0005524">
    <property type="term" value="F:ATP binding"/>
    <property type="evidence" value="ECO:0007669"/>
    <property type="project" value="UniProtKB-KW"/>
</dbReference>
<dbReference type="GO" id="GO:0050567">
    <property type="term" value="F:glutaminyl-tRNA synthase (glutamine-hydrolyzing) activity"/>
    <property type="evidence" value="ECO:0007669"/>
    <property type="project" value="UniProtKB-UniRule"/>
</dbReference>
<dbReference type="GO" id="GO:0070681">
    <property type="term" value="P:glutaminyl-tRNAGln biosynthesis via transamidation"/>
    <property type="evidence" value="ECO:0007669"/>
    <property type="project" value="TreeGrafter"/>
</dbReference>
<dbReference type="GO" id="GO:0006412">
    <property type="term" value="P:translation"/>
    <property type="evidence" value="ECO:0007669"/>
    <property type="project" value="UniProtKB-UniRule"/>
</dbReference>
<dbReference type="FunFam" id="1.10.10.410:FF:000001">
    <property type="entry name" value="Aspartyl/glutamyl-tRNA(Asn/Gln) amidotransferase subunit B"/>
    <property type="match status" value="1"/>
</dbReference>
<dbReference type="FunFam" id="1.10.150.380:FF:000001">
    <property type="entry name" value="Aspartyl/glutamyl-tRNA(Asn/Gln) amidotransferase subunit B"/>
    <property type="match status" value="1"/>
</dbReference>
<dbReference type="Gene3D" id="1.10.10.410">
    <property type="match status" value="1"/>
</dbReference>
<dbReference type="Gene3D" id="1.10.150.380">
    <property type="entry name" value="GatB domain, N-terminal subdomain"/>
    <property type="match status" value="1"/>
</dbReference>
<dbReference type="HAMAP" id="MF_00121">
    <property type="entry name" value="GatB"/>
    <property type="match status" value="1"/>
</dbReference>
<dbReference type="InterPro" id="IPR017959">
    <property type="entry name" value="Asn/Gln-tRNA_amidoTrfase_suB/E"/>
</dbReference>
<dbReference type="InterPro" id="IPR006075">
    <property type="entry name" value="Asn/Gln-tRNA_Trfase_suB/E_cat"/>
</dbReference>
<dbReference type="InterPro" id="IPR018027">
    <property type="entry name" value="Asn/Gln_amidotransferase"/>
</dbReference>
<dbReference type="InterPro" id="IPR003789">
    <property type="entry name" value="Asn/Gln_tRNA_amidoTrase-B-like"/>
</dbReference>
<dbReference type="InterPro" id="IPR004413">
    <property type="entry name" value="GatB"/>
</dbReference>
<dbReference type="InterPro" id="IPR042114">
    <property type="entry name" value="GatB_C_1"/>
</dbReference>
<dbReference type="InterPro" id="IPR023168">
    <property type="entry name" value="GatB_Yqey_C_2"/>
</dbReference>
<dbReference type="InterPro" id="IPR017958">
    <property type="entry name" value="Gln-tRNA_amidoTrfase_suB_CS"/>
</dbReference>
<dbReference type="InterPro" id="IPR014746">
    <property type="entry name" value="Gln_synth/guanido_kin_cat_dom"/>
</dbReference>
<dbReference type="NCBIfam" id="TIGR00133">
    <property type="entry name" value="gatB"/>
    <property type="match status" value="1"/>
</dbReference>
<dbReference type="NCBIfam" id="NF004011">
    <property type="entry name" value="PRK05477.1-1"/>
    <property type="match status" value="1"/>
</dbReference>
<dbReference type="NCBIfam" id="NF004012">
    <property type="entry name" value="PRK05477.1-2"/>
    <property type="match status" value="1"/>
</dbReference>
<dbReference type="NCBIfam" id="NF004014">
    <property type="entry name" value="PRK05477.1-4"/>
    <property type="match status" value="1"/>
</dbReference>
<dbReference type="PANTHER" id="PTHR11659">
    <property type="entry name" value="GLUTAMYL-TRNA GLN AMIDOTRANSFERASE SUBUNIT B MITOCHONDRIAL AND PROKARYOTIC PET112-RELATED"/>
    <property type="match status" value="1"/>
</dbReference>
<dbReference type="PANTHER" id="PTHR11659:SF0">
    <property type="entry name" value="GLUTAMYL-TRNA(GLN) AMIDOTRANSFERASE SUBUNIT B, MITOCHONDRIAL"/>
    <property type="match status" value="1"/>
</dbReference>
<dbReference type="Pfam" id="PF02934">
    <property type="entry name" value="GatB_N"/>
    <property type="match status" value="1"/>
</dbReference>
<dbReference type="Pfam" id="PF02637">
    <property type="entry name" value="GatB_Yqey"/>
    <property type="match status" value="1"/>
</dbReference>
<dbReference type="SMART" id="SM00845">
    <property type="entry name" value="GatB_Yqey"/>
    <property type="match status" value="1"/>
</dbReference>
<dbReference type="SUPFAM" id="SSF89095">
    <property type="entry name" value="GatB/YqeY motif"/>
    <property type="match status" value="1"/>
</dbReference>
<dbReference type="SUPFAM" id="SSF55931">
    <property type="entry name" value="Glutamine synthetase/guanido kinase"/>
    <property type="match status" value="1"/>
</dbReference>
<dbReference type="PROSITE" id="PS01234">
    <property type="entry name" value="GATB"/>
    <property type="match status" value="1"/>
</dbReference>
<protein>
    <recommendedName>
        <fullName evidence="1">Aspartyl/glutamyl-tRNA(Asn/Gln) amidotransferase subunit B</fullName>
        <shortName evidence="1">Asp/Glu-ADT subunit B</shortName>
        <ecNumber evidence="1">6.3.5.-</ecNumber>
    </recommendedName>
</protein>
<proteinExistence type="inferred from homology"/>
<evidence type="ECO:0000255" key="1">
    <source>
        <dbReference type="HAMAP-Rule" id="MF_00121"/>
    </source>
</evidence>
<reference key="1">
    <citation type="journal article" date="2006" name="Proc. Natl. Acad. Sci. U.S.A.">
        <title>Comparative genomics of the lactic acid bacteria.</title>
        <authorList>
            <person name="Makarova K.S."/>
            <person name="Slesarev A."/>
            <person name="Wolf Y.I."/>
            <person name="Sorokin A."/>
            <person name="Mirkin B."/>
            <person name="Koonin E.V."/>
            <person name="Pavlov A."/>
            <person name="Pavlova N."/>
            <person name="Karamychev V."/>
            <person name="Polouchine N."/>
            <person name="Shakhova V."/>
            <person name="Grigoriev I."/>
            <person name="Lou Y."/>
            <person name="Rohksar D."/>
            <person name="Lucas S."/>
            <person name="Huang K."/>
            <person name="Goodstein D.M."/>
            <person name="Hawkins T."/>
            <person name="Plengvidhya V."/>
            <person name="Welker D."/>
            <person name="Hughes J."/>
            <person name="Goh Y."/>
            <person name="Benson A."/>
            <person name="Baldwin K."/>
            <person name="Lee J.-H."/>
            <person name="Diaz-Muniz I."/>
            <person name="Dosti B."/>
            <person name="Smeianov V."/>
            <person name="Wechter W."/>
            <person name="Barabote R."/>
            <person name="Lorca G."/>
            <person name="Altermann E."/>
            <person name="Barrangou R."/>
            <person name="Ganesan B."/>
            <person name="Xie Y."/>
            <person name="Rawsthorne H."/>
            <person name="Tamir D."/>
            <person name="Parker C."/>
            <person name="Breidt F."/>
            <person name="Broadbent J.R."/>
            <person name="Hutkins R."/>
            <person name="O'Sullivan D."/>
            <person name="Steele J."/>
            <person name="Unlu G."/>
            <person name="Saier M.H. Jr."/>
            <person name="Klaenhammer T."/>
            <person name="Richardson P."/>
            <person name="Kozyavkin S."/>
            <person name="Weimer B.C."/>
            <person name="Mills D.A."/>
        </authorList>
    </citation>
    <scope>NUCLEOTIDE SEQUENCE [LARGE SCALE GENOMIC DNA]</scope>
    <source>
        <strain>ATCC 25745 / CCUG 21536 / LMG 10740 / 183-1w</strain>
    </source>
</reference>
<comment type="function">
    <text evidence="1">Allows the formation of correctly charged Asn-tRNA(Asn) or Gln-tRNA(Gln) through the transamidation of misacylated Asp-tRNA(Asn) or Glu-tRNA(Gln) in organisms which lack either or both of asparaginyl-tRNA or glutaminyl-tRNA synthetases. The reaction takes place in the presence of glutamine and ATP through an activated phospho-Asp-tRNA(Asn) or phospho-Glu-tRNA(Gln).</text>
</comment>
<comment type="catalytic activity">
    <reaction evidence="1">
        <text>L-glutamyl-tRNA(Gln) + L-glutamine + ATP + H2O = L-glutaminyl-tRNA(Gln) + L-glutamate + ADP + phosphate + H(+)</text>
        <dbReference type="Rhea" id="RHEA:17521"/>
        <dbReference type="Rhea" id="RHEA-COMP:9681"/>
        <dbReference type="Rhea" id="RHEA-COMP:9684"/>
        <dbReference type="ChEBI" id="CHEBI:15377"/>
        <dbReference type="ChEBI" id="CHEBI:15378"/>
        <dbReference type="ChEBI" id="CHEBI:29985"/>
        <dbReference type="ChEBI" id="CHEBI:30616"/>
        <dbReference type="ChEBI" id="CHEBI:43474"/>
        <dbReference type="ChEBI" id="CHEBI:58359"/>
        <dbReference type="ChEBI" id="CHEBI:78520"/>
        <dbReference type="ChEBI" id="CHEBI:78521"/>
        <dbReference type="ChEBI" id="CHEBI:456216"/>
    </reaction>
</comment>
<comment type="catalytic activity">
    <reaction evidence="1">
        <text>L-aspartyl-tRNA(Asn) + L-glutamine + ATP + H2O = L-asparaginyl-tRNA(Asn) + L-glutamate + ADP + phosphate + 2 H(+)</text>
        <dbReference type="Rhea" id="RHEA:14513"/>
        <dbReference type="Rhea" id="RHEA-COMP:9674"/>
        <dbReference type="Rhea" id="RHEA-COMP:9677"/>
        <dbReference type="ChEBI" id="CHEBI:15377"/>
        <dbReference type="ChEBI" id="CHEBI:15378"/>
        <dbReference type="ChEBI" id="CHEBI:29985"/>
        <dbReference type="ChEBI" id="CHEBI:30616"/>
        <dbReference type="ChEBI" id="CHEBI:43474"/>
        <dbReference type="ChEBI" id="CHEBI:58359"/>
        <dbReference type="ChEBI" id="CHEBI:78515"/>
        <dbReference type="ChEBI" id="CHEBI:78516"/>
        <dbReference type="ChEBI" id="CHEBI:456216"/>
    </reaction>
</comment>
<comment type="subunit">
    <text evidence="1">Heterotrimer of A, B and C subunits.</text>
</comment>
<comment type="similarity">
    <text evidence="1">Belongs to the GatB/GatE family. GatB subfamily.</text>
</comment>
<gene>
    <name evidence="1" type="primary">gatB</name>
    <name type="ordered locus">PEPE_1368</name>
</gene>
<feature type="chain" id="PRO_1000016014" description="Aspartyl/glutamyl-tRNA(Asn/Gln) amidotransferase subunit B">
    <location>
        <begin position="1"/>
        <end position="475"/>
    </location>
</feature>
<name>GATB_PEDPA</name>
<sequence length="475" mass="53366">MNFKTTIGLEVHIELKTNSKIFSPSPVEFGDQPNANTNVIDWGYPGVLPQTNKGVVEAGMMAAKALHANITRTQHFDRKNYFYPDNPKAYQVTQADTPIGTDGWIEIEVEGKKKKVGIAEMHIEEDAGKNSHNPNGYSYVDLNRQGTPLIEIVSKPDIESPDEAYAYLEALRQRIQFTGISDVKMEEGSMRVDVNISIRPLGSEKFGTKAELKNINSFNFVRKGLAFEEKRQQKILLAGGQVRPETRRYDEATGQTILMRVKEGAEDYRYFPEPDLPSITIDDEWIKDVEDKMPEMPGKRRARYVEELGLTDYDAMVLTQTKEMSDFFEATVAQGADPKLTANYLMGDVNAYLNDQKVDLQETKLTPEHLASMVKMITDETISSKMAKKVFKAITQGEEPTSWVKAKGLVQLSDPAVLKPMIVEIVDNNEQSVADFKNGKDRAVGFLVGQIMKQTKGQANPKVVNKILMQELNSR</sequence>
<organism>
    <name type="scientific">Pediococcus pentosaceus (strain ATCC 25745 / CCUG 21536 / LMG 10740 / 183-1w)</name>
    <dbReference type="NCBI Taxonomy" id="278197"/>
    <lineage>
        <taxon>Bacteria</taxon>
        <taxon>Bacillati</taxon>
        <taxon>Bacillota</taxon>
        <taxon>Bacilli</taxon>
        <taxon>Lactobacillales</taxon>
        <taxon>Lactobacillaceae</taxon>
        <taxon>Pediococcus</taxon>
    </lineage>
</organism>